<name>LIPB_SHESA</name>
<organism>
    <name type="scientific">Shewanella sp. (strain ANA-3)</name>
    <dbReference type="NCBI Taxonomy" id="94122"/>
    <lineage>
        <taxon>Bacteria</taxon>
        <taxon>Pseudomonadati</taxon>
        <taxon>Pseudomonadota</taxon>
        <taxon>Gammaproteobacteria</taxon>
        <taxon>Alteromonadales</taxon>
        <taxon>Shewanellaceae</taxon>
        <taxon>Shewanella</taxon>
    </lineage>
</organism>
<feature type="chain" id="PRO_1000001132" description="Octanoyltransferase">
    <location>
        <begin position="1"/>
        <end position="217"/>
    </location>
</feature>
<feature type="domain" description="BPL/LPL catalytic" evidence="2">
    <location>
        <begin position="32"/>
        <end position="207"/>
    </location>
</feature>
<feature type="active site" description="Acyl-thioester intermediate" evidence="1">
    <location>
        <position position="169"/>
    </location>
</feature>
<feature type="binding site" evidence="1">
    <location>
        <begin position="71"/>
        <end position="78"/>
    </location>
    <ligand>
        <name>substrate</name>
    </ligand>
</feature>
<feature type="binding site" evidence="1">
    <location>
        <begin position="138"/>
        <end position="140"/>
    </location>
    <ligand>
        <name>substrate</name>
    </ligand>
</feature>
<feature type="binding site" evidence="1">
    <location>
        <begin position="151"/>
        <end position="153"/>
    </location>
    <ligand>
        <name>substrate</name>
    </ligand>
</feature>
<feature type="site" description="Lowers pKa of active site Cys" evidence="1">
    <location>
        <position position="135"/>
    </location>
</feature>
<gene>
    <name evidence="1" type="primary">lipB</name>
    <name type="ordered locus">Shewana3_0989</name>
</gene>
<evidence type="ECO:0000255" key="1">
    <source>
        <dbReference type="HAMAP-Rule" id="MF_00013"/>
    </source>
</evidence>
<evidence type="ECO:0000255" key="2">
    <source>
        <dbReference type="PROSITE-ProRule" id="PRU01067"/>
    </source>
</evidence>
<comment type="function">
    <text evidence="1">Catalyzes the transfer of endogenously produced octanoic acid from octanoyl-acyl-carrier-protein onto the lipoyl domains of lipoate-dependent enzymes. Lipoyl-ACP can also act as a substrate although octanoyl-ACP is likely to be the physiological substrate.</text>
</comment>
<comment type="catalytic activity">
    <reaction evidence="1">
        <text>octanoyl-[ACP] + L-lysyl-[protein] = N(6)-octanoyl-L-lysyl-[protein] + holo-[ACP] + H(+)</text>
        <dbReference type="Rhea" id="RHEA:17665"/>
        <dbReference type="Rhea" id="RHEA-COMP:9636"/>
        <dbReference type="Rhea" id="RHEA-COMP:9685"/>
        <dbReference type="Rhea" id="RHEA-COMP:9752"/>
        <dbReference type="Rhea" id="RHEA-COMP:9928"/>
        <dbReference type="ChEBI" id="CHEBI:15378"/>
        <dbReference type="ChEBI" id="CHEBI:29969"/>
        <dbReference type="ChEBI" id="CHEBI:64479"/>
        <dbReference type="ChEBI" id="CHEBI:78463"/>
        <dbReference type="ChEBI" id="CHEBI:78809"/>
        <dbReference type="EC" id="2.3.1.181"/>
    </reaction>
</comment>
<comment type="pathway">
    <text evidence="1">Protein modification; protein lipoylation via endogenous pathway; protein N(6)-(lipoyl)lysine from octanoyl-[acyl-carrier-protein]: step 1/2.</text>
</comment>
<comment type="subcellular location">
    <subcellularLocation>
        <location evidence="1">Cytoplasm</location>
    </subcellularLocation>
</comment>
<comment type="miscellaneous">
    <text evidence="1">In the reaction, the free carboxyl group of octanoic acid is attached via an amide linkage to the epsilon-amino group of a specific lysine residue of lipoyl domains of lipoate-dependent enzymes.</text>
</comment>
<comment type="similarity">
    <text evidence="1">Belongs to the LipB family.</text>
</comment>
<keyword id="KW-0012">Acyltransferase</keyword>
<keyword id="KW-0963">Cytoplasm</keyword>
<keyword id="KW-0808">Transferase</keyword>
<proteinExistence type="inferred from homology"/>
<accession>A0KTV5</accession>
<sequence>MQDTTLHIRHLGQQDYESVWHAMQHYTDTRNSDSPDELWIVEHPPVFTQGQAGKSEHILNPGDIPVIQVDRGGQVTYHGPGQLVVYPLLDIKRSKIGVRQLVTHIEQSIIDMLAKYDINAYAKADAPGVYVDQRKVASLGLRIRKGCSFHGLALNVDMDLAPFRRINPCGYAGLEMVQCKELGGPQTVIEAGDQLIITLSQLLGYQQLVHHQGLAAS</sequence>
<dbReference type="EC" id="2.3.1.181" evidence="1"/>
<dbReference type="EMBL" id="CP000469">
    <property type="protein sequence ID" value="ABK47224.1"/>
    <property type="molecule type" value="Genomic_DNA"/>
</dbReference>
<dbReference type="RefSeq" id="WP_011716113.1">
    <property type="nucleotide sequence ID" value="NC_008577.1"/>
</dbReference>
<dbReference type="SMR" id="A0KTV5"/>
<dbReference type="STRING" id="94122.Shewana3_0989"/>
<dbReference type="KEGG" id="shn:Shewana3_0989"/>
<dbReference type="eggNOG" id="COG0321">
    <property type="taxonomic scope" value="Bacteria"/>
</dbReference>
<dbReference type="HOGENOM" id="CLU_035168_3_1_6"/>
<dbReference type="OrthoDB" id="9787061at2"/>
<dbReference type="UniPathway" id="UPA00538">
    <property type="reaction ID" value="UER00592"/>
</dbReference>
<dbReference type="Proteomes" id="UP000002589">
    <property type="component" value="Chromosome"/>
</dbReference>
<dbReference type="GO" id="GO:0005737">
    <property type="term" value="C:cytoplasm"/>
    <property type="evidence" value="ECO:0007669"/>
    <property type="project" value="UniProtKB-SubCell"/>
</dbReference>
<dbReference type="GO" id="GO:0033819">
    <property type="term" value="F:lipoyl(octanoyl) transferase activity"/>
    <property type="evidence" value="ECO:0007669"/>
    <property type="project" value="UniProtKB-EC"/>
</dbReference>
<dbReference type="GO" id="GO:0036211">
    <property type="term" value="P:protein modification process"/>
    <property type="evidence" value="ECO:0007669"/>
    <property type="project" value="InterPro"/>
</dbReference>
<dbReference type="CDD" id="cd16444">
    <property type="entry name" value="LipB"/>
    <property type="match status" value="1"/>
</dbReference>
<dbReference type="FunFam" id="3.30.930.10:FF:000020">
    <property type="entry name" value="Octanoyltransferase"/>
    <property type="match status" value="1"/>
</dbReference>
<dbReference type="Gene3D" id="3.30.930.10">
    <property type="entry name" value="Bira Bifunctional Protein, Domain 2"/>
    <property type="match status" value="1"/>
</dbReference>
<dbReference type="HAMAP" id="MF_00013">
    <property type="entry name" value="LipB"/>
    <property type="match status" value="1"/>
</dbReference>
<dbReference type="InterPro" id="IPR045864">
    <property type="entry name" value="aa-tRNA-synth_II/BPL/LPL"/>
</dbReference>
<dbReference type="InterPro" id="IPR004143">
    <property type="entry name" value="BPL_LPL_catalytic"/>
</dbReference>
<dbReference type="InterPro" id="IPR000544">
    <property type="entry name" value="Octanoyltransferase"/>
</dbReference>
<dbReference type="InterPro" id="IPR020605">
    <property type="entry name" value="Octanoyltransferase_CS"/>
</dbReference>
<dbReference type="NCBIfam" id="TIGR00214">
    <property type="entry name" value="lipB"/>
    <property type="match status" value="1"/>
</dbReference>
<dbReference type="NCBIfam" id="NF010922">
    <property type="entry name" value="PRK14342.1"/>
    <property type="match status" value="1"/>
</dbReference>
<dbReference type="PANTHER" id="PTHR10993:SF7">
    <property type="entry name" value="LIPOYLTRANSFERASE 2, MITOCHONDRIAL-RELATED"/>
    <property type="match status" value="1"/>
</dbReference>
<dbReference type="PANTHER" id="PTHR10993">
    <property type="entry name" value="OCTANOYLTRANSFERASE"/>
    <property type="match status" value="1"/>
</dbReference>
<dbReference type="Pfam" id="PF21948">
    <property type="entry name" value="LplA-B_cat"/>
    <property type="match status" value="1"/>
</dbReference>
<dbReference type="PIRSF" id="PIRSF016262">
    <property type="entry name" value="LPLase"/>
    <property type="match status" value="1"/>
</dbReference>
<dbReference type="SUPFAM" id="SSF55681">
    <property type="entry name" value="Class II aaRS and biotin synthetases"/>
    <property type="match status" value="1"/>
</dbReference>
<dbReference type="PROSITE" id="PS51733">
    <property type="entry name" value="BPL_LPL_CATALYTIC"/>
    <property type="match status" value="1"/>
</dbReference>
<dbReference type="PROSITE" id="PS01313">
    <property type="entry name" value="LIPB"/>
    <property type="match status" value="1"/>
</dbReference>
<protein>
    <recommendedName>
        <fullName evidence="1">Octanoyltransferase</fullName>
        <ecNumber evidence="1">2.3.1.181</ecNumber>
    </recommendedName>
    <alternativeName>
        <fullName evidence="1">Lipoate-protein ligase B</fullName>
    </alternativeName>
    <alternativeName>
        <fullName evidence="1">Lipoyl/octanoyl transferase</fullName>
    </alternativeName>
    <alternativeName>
        <fullName evidence="1">Octanoyl-[acyl-carrier-protein]-protein N-octanoyltransferase</fullName>
    </alternativeName>
</protein>
<reference key="1">
    <citation type="submission" date="2006-09" db="EMBL/GenBank/DDBJ databases">
        <title>Complete sequence of chromosome 1 of Shewanella sp. ANA-3.</title>
        <authorList>
            <person name="Copeland A."/>
            <person name="Lucas S."/>
            <person name="Lapidus A."/>
            <person name="Barry K."/>
            <person name="Detter J.C."/>
            <person name="Glavina del Rio T."/>
            <person name="Hammon N."/>
            <person name="Israni S."/>
            <person name="Dalin E."/>
            <person name="Tice H."/>
            <person name="Pitluck S."/>
            <person name="Chertkov O."/>
            <person name="Brettin T."/>
            <person name="Bruce D."/>
            <person name="Han C."/>
            <person name="Tapia R."/>
            <person name="Gilna P."/>
            <person name="Schmutz J."/>
            <person name="Larimer F."/>
            <person name="Land M."/>
            <person name="Hauser L."/>
            <person name="Kyrpides N."/>
            <person name="Kim E."/>
            <person name="Newman D."/>
            <person name="Salticov C."/>
            <person name="Konstantinidis K."/>
            <person name="Klappenback J."/>
            <person name="Tiedje J."/>
            <person name="Richardson P."/>
        </authorList>
    </citation>
    <scope>NUCLEOTIDE SEQUENCE [LARGE SCALE GENOMIC DNA]</scope>
    <source>
        <strain>ANA-3</strain>
    </source>
</reference>